<keyword id="KW-0002">3D-structure</keyword>
<keyword id="KW-0106">Calcium</keyword>
<keyword id="KW-1003">Cell membrane</keyword>
<keyword id="KW-0966">Cell projection</keyword>
<keyword id="KW-0968">Cytoplasmic vesicle</keyword>
<keyword id="KW-0446">Lipid-binding</keyword>
<keyword id="KW-0472">Membrane</keyword>
<keyword id="KW-0479">Metal-binding</keyword>
<keyword id="KW-0488">Methylation</keyword>
<keyword id="KW-0597">Phosphoprotein</keyword>
<keyword id="KW-0628">Postsynaptic cell membrane</keyword>
<keyword id="KW-0653">Protein transport</keyword>
<keyword id="KW-1185">Reference proteome</keyword>
<keyword id="KW-0677">Repeat</keyword>
<keyword id="KW-0770">Synapse</keyword>
<keyword id="KW-0813">Transport</keyword>
<keyword id="KW-0832">Ubl conjugation</keyword>
<keyword id="KW-0862">Zinc</keyword>
<keyword id="KW-0863">Zinc-finger</keyword>
<feature type="chain" id="PRO_0000190228" description="Rabphilin-3A">
    <location>
        <begin position="1"/>
        <end position="681"/>
    </location>
</feature>
<feature type="domain" description="RabBD" evidence="5">
    <location>
        <begin position="40"/>
        <end position="157"/>
    </location>
</feature>
<feature type="domain" description="C2 1" evidence="3">
    <location>
        <begin position="379"/>
        <end position="501"/>
    </location>
</feature>
<feature type="domain" description="C2 2" evidence="3">
    <location>
        <begin position="537"/>
        <end position="670"/>
    </location>
</feature>
<feature type="zinc finger region" description="FYVE-type" evidence="4">
    <location>
        <begin position="88"/>
        <end position="145"/>
    </location>
</feature>
<feature type="region of interest" description="Disordered" evidence="6">
    <location>
        <begin position="1"/>
        <end position="21"/>
    </location>
</feature>
<feature type="region of interest" description="Disordered" evidence="6">
    <location>
        <begin position="162"/>
        <end position="375"/>
    </location>
</feature>
<feature type="compositionally biased region" description="Basic and acidic residues" evidence="6">
    <location>
        <begin position="199"/>
        <end position="208"/>
    </location>
</feature>
<feature type="compositionally biased region" description="Basic and acidic residues" evidence="6">
    <location>
        <begin position="243"/>
        <end position="252"/>
    </location>
</feature>
<feature type="compositionally biased region" description="Pro residues" evidence="6">
    <location>
        <begin position="278"/>
        <end position="296"/>
    </location>
</feature>
<feature type="compositionally biased region" description="Low complexity" evidence="6">
    <location>
        <begin position="347"/>
        <end position="356"/>
    </location>
</feature>
<feature type="compositionally biased region" description="Acidic residues" evidence="6">
    <location>
        <begin position="362"/>
        <end position="375"/>
    </location>
</feature>
<feature type="binding site" evidence="4">
    <location>
        <position position="94"/>
    </location>
    <ligand>
        <name>Zn(2+)</name>
        <dbReference type="ChEBI" id="CHEBI:29105"/>
        <label>1</label>
    </ligand>
</feature>
<feature type="binding site" evidence="4">
    <location>
        <position position="97"/>
    </location>
    <ligand>
        <name>Zn(2+)</name>
        <dbReference type="ChEBI" id="CHEBI:29105"/>
        <label>1</label>
    </ligand>
</feature>
<feature type="binding site" evidence="4">
    <location>
        <position position="111"/>
    </location>
    <ligand>
        <name>Zn(2+)</name>
        <dbReference type="ChEBI" id="CHEBI:29105"/>
        <label>2</label>
    </ligand>
</feature>
<feature type="binding site" evidence="4">
    <location>
        <position position="114"/>
    </location>
    <ligand>
        <name>Zn(2+)</name>
        <dbReference type="ChEBI" id="CHEBI:29105"/>
        <label>2</label>
    </ligand>
</feature>
<feature type="binding site" evidence="4">
    <location>
        <position position="119"/>
    </location>
    <ligand>
        <name>Zn(2+)</name>
        <dbReference type="ChEBI" id="CHEBI:29105"/>
        <label>1</label>
    </ligand>
</feature>
<feature type="binding site" evidence="4">
    <location>
        <position position="122"/>
    </location>
    <ligand>
        <name>Zn(2+)</name>
        <dbReference type="ChEBI" id="CHEBI:29105"/>
        <label>1</label>
    </ligand>
</feature>
<feature type="binding site" evidence="4">
    <location>
        <position position="137"/>
    </location>
    <ligand>
        <name>Zn(2+)</name>
        <dbReference type="ChEBI" id="CHEBI:29105"/>
        <label>2</label>
    </ligand>
</feature>
<feature type="binding site" evidence="4">
    <location>
        <position position="140"/>
    </location>
    <ligand>
        <name>Zn(2+)</name>
        <dbReference type="ChEBI" id="CHEBI:29105"/>
        <label>2</label>
    </ligand>
</feature>
<feature type="binding site" evidence="9 10">
    <location>
        <position position="409"/>
    </location>
    <ligand>
        <name>Ca(2+)</name>
        <dbReference type="ChEBI" id="CHEBI:29108"/>
        <label>1</label>
    </ligand>
</feature>
<feature type="binding site" evidence="9 10">
    <location>
        <position position="410"/>
    </location>
    <ligand>
        <name>Ca(2+)</name>
        <dbReference type="ChEBI" id="CHEBI:29108"/>
        <label>1</label>
    </ligand>
</feature>
<feature type="binding site" evidence="9 10">
    <location>
        <position position="410"/>
    </location>
    <ligand>
        <name>Ca(2+)</name>
        <dbReference type="ChEBI" id="CHEBI:29108"/>
        <label>2</label>
    </ligand>
</feature>
<feature type="binding site" evidence="9 10">
    <location>
        <position position="416"/>
    </location>
    <ligand>
        <name>Ca(2+)</name>
        <dbReference type="ChEBI" id="CHEBI:29108"/>
        <label>2</label>
    </ligand>
</feature>
<feature type="binding site" evidence="9 10">
    <location>
        <position position="471"/>
    </location>
    <ligand>
        <name>Ca(2+)</name>
        <dbReference type="ChEBI" id="CHEBI:29108"/>
        <label>1</label>
    </ligand>
</feature>
<feature type="binding site" evidence="9 10">
    <location>
        <position position="471"/>
    </location>
    <ligand>
        <name>Ca(2+)</name>
        <dbReference type="ChEBI" id="CHEBI:29108"/>
        <label>2</label>
    </ligand>
</feature>
<feature type="binding site" evidence="9 10">
    <location>
        <position position="472"/>
    </location>
    <ligand>
        <name>Ca(2+)</name>
        <dbReference type="ChEBI" id="CHEBI:29108"/>
        <label>2</label>
    </ligand>
</feature>
<feature type="binding site" evidence="9 10">
    <location>
        <position position="473"/>
    </location>
    <ligand>
        <name>Ca(2+)</name>
        <dbReference type="ChEBI" id="CHEBI:29108"/>
        <label>1</label>
    </ligand>
</feature>
<feature type="binding site" evidence="9 10">
    <location>
        <position position="473"/>
    </location>
    <ligand>
        <name>Ca(2+)</name>
        <dbReference type="ChEBI" id="CHEBI:29108"/>
        <label>2</label>
    </ligand>
</feature>
<feature type="binding site" evidence="9 10">
    <location>
        <position position="479"/>
    </location>
    <ligand>
        <name>Ca(2+)</name>
        <dbReference type="ChEBI" id="CHEBI:29108"/>
        <label>1</label>
    </ligand>
</feature>
<feature type="binding site" evidence="1">
    <location>
        <position position="526"/>
    </location>
    <ligand>
        <name>Ca(2+)</name>
        <dbReference type="ChEBI" id="CHEBI:29108"/>
        <label>3</label>
    </ligand>
</feature>
<feature type="binding site" evidence="1">
    <location>
        <position position="568"/>
    </location>
    <ligand>
        <name>Ca(2+)</name>
        <dbReference type="ChEBI" id="CHEBI:29108"/>
        <label>3</label>
    </ligand>
</feature>
<feature type="binding site" evidence="1">
    <location>
        <position position="568"/>
    </location>
    <ligand>
        <name>Ca(2+)</name>
        <dbReference type="ChEBI" id="CHEBI:29108"/>
        <label>4</label>
    </ligand>
</feature>
<feature type="binding site" evidence="1">
    <location>
        <position position="574"/>
    </location>
    <ligand>
        <name>Ca(2+)</name>
        <dbReference type="ChEBI" id="CHEBI:29108"/>
        <label>3</label>
    </ligand>
</feature>
<feature type="binding site" evidence="1">
    <location>
        <position position="628"/>
    </location>
    <ligand>
        <name>Ca(2+)</name>
        <dbReference type="ChEBI" id="CHEBI:29108"/>
        <label>3</label>
    </ligand>
</feature>
<feature type="binding site" evidence="1">
    <location>
        <position position="628"/>
    </location>
    <ligand>
        <name>Ca(2+)</name>
        <dbReference type="ChEBI" id="CHEBI:29108"/>
        <label>4</label>
    </ligand>
</feature>
<feature type="binding site" evidence="1">
    <location>
        <position position="629"/>
    </location>
    <ligand>
        <name>Ca(2+)</name>
        <dbReference type="ChEBI" id="CHEBI:29108"/>
        <label>3</label>
    </ligand>
</feature>
<feature type="binding site" evidence="1">
    <location>
        <position position="630"/>
    </location>
    <ligand>
        <name>Ca(2+)</name>
        <dbReference type="ChEBI" id="CHEBI:29108"/>
        <label>3</label>
    </ligand>
</feature>
<feature type="binding site" evidence="1">
    <location>
        <position position="630"/>
    </location>
    <ligand>
        <name>Ca(2+)</name>
        <dbReference type="ChEBI" id="CHEBI:29108"/>
        <label>4</label>
    </ligand>
</feature>
<feature type="binding site" evidence="1">
    <location>
        <position position="636"/>
    </location>
    <ligand>
        <name>Ca(2+)</name>
        <dbReference type="ChEBI" id="CHEBI:29108"/>
        <label>4</label>
    </ligand>
</feature>
<feature type="modified residue" description="Omega-N-methylarginine" evidence="12">
    <location>
        <position position="223"/>
    </location>
</feature>
<feature type="modified residue" description="Phosphoserine" evidence="11">
    <location>
        <position position="271"/>
    </location>
</feature>
<feature type="modified residue" description="Phosphoserine" evidence="1">
    <location>
        <position position="679"/>
    </location>
</feature>
<feature type="modified residue" description="Phosphoserine" evidence="1">
    <location>
        <position position="680"/>
    </location>
</feature>
<feature type="strand" evidence="13">
    <location>
        <begin position="382"/>
        <end position="390"/>
    </location>
</feature>
<feature type="turn" evidence="13">
    <location>
        <begin position="391"/>
        <end position="394"/>
    </location>
</feature>
<feature type="strand" evidence="13">
    <location>
        <begin position="395"/>
        <end position="404"/>
    </location>
</feature>
<feature type="strand" evidence="13">
    <location>
        <begin position="417"/>
        <end position="426"/>
    </location>
</feature>
<feature type="turn" evidence="13">
    <location>
        <begin position="428"/>
        <end position="430"/>
    </location>
</feature>
<feature type="strand" evidence="13">
    <location>
        <begin position="432"/>
        <end position="437"/>
    </location>
</feature>
<feature type="strand" evidence="13">
    <location>
        <begin position="445"/>
        <end position="453"/>
    </location>
</feature>
<feature type="helix" evidence="13">
    <location>
        <begin position="457"/>
        <end position="460"/>
    </location>
</feature>
<feature type="strand" evidence="13">
    <location>
        <begin position="464"/>
        <end position="472"/>
    </location>
</feature>
<feature type="strand" evidence="13">
    <location>
        <begin position="474"/>
        <end position="476"/>
    </location>
</feature>
<feature type="strand" evidence="13">
    <location>
        <begin position="478"/>
        <end position="487"/>
    </location>
</feature>
<feature type="helix" evidence="13">
    <location>
        <begin position="488"/>
        <end position="490"/>
    </location>
</feature>
<feature type="strand" evidence="13">
    <location>
        <begin position="495"/>
        <end position="502"/>
    </location>
</feature>
<dbReference type="EMBL" id="BC042585">
    <property type="protein sequence ID" value="AAH42585.1"/>
    <property type="molecule type" value="mRNA"/>
</dbReference>
<dbReference type="EMBL" id="BC050883">
    <property type="protein sequence ID" value="AAH50883.1"/>
    <property type="molecule type" value="mRNA"/>
</dbReference>
<dbReference type="EMBL" id="D29965">
    <property type="protein sequence ID" value="BAA06231.2"/>
    <property type="molecule type" value="mRNA"/>
</dbReference>
<dbReference type="CCDS" id="CCDS39246.1"/>
<dbReference type="PIR" id="JX0338">
    <property type="entry name" value="JX0338"/>
</dbReference>
<dbReference type="RefSeq" id="NP_001289273.1">
    <property type="nucleotide sequence ID" value="NM_001302344.2"/>
</dbReference>
<dbReference type="RefSeq" id="NP_001289274.1">
    <property type="nucleotide sequence ID" value="NM_001302345.2"/>
</dbReference>
<dbReference type="RefSeq" id="NP_035416.1">
    <property type="nucleotide sequence ID" value="NM_011286.4"/>
</dbReference>
<dbReference type="PDB" id="2K3H">
    <property type="method" value="NMR"/>
    <property type="chains" value="A=368-507"/>
</dbReference>
<dbReference type="PDBsum" id="2K3H"/>
<dbReference type="SMR" id="P47708"/>
<dbReference type="BioGRID" id="202964">
    <property type="interactions" value="21"/>
</dbReference>
<dbReference type="FunCoup" id="P47708">
    <property type="interactions" value="497"/>
</dbReference>
<dbReference type="IntAct" id="P47708">
    <property type="interactions" value="6"/>
</dbReference>
<dbReference type="STRING" id="10090.ENSMUSP00000078198"/>
<dbReference type="GlyGen" id="P47708">
    <property type="glycosylation" value="4 sites, 1 O-linked glycan (3 sites)"/>
</dbReference>
<dbReference type="iPTMnet" id="P47708"/>
<dbReference type="PhosphoSitePlus" id="P47708"/>
<dbReference type="SwissPalm" id="P47708"/>
<dbReference type="PaxDb" id="10090-ENSMUSP00000078198"/>
<dbReference type="PeptideAtlas" id="P47708"/>
<dbReference type="ProteomicsDB" id="300433"/>
<dbReference type="Antibodypedia" id="996">
    <property type="antibodies" value="278 antibodies from 34 providers"/>
</dbReference>
<dbReference type="DNASU" id="19894"/>
<dbReference type="Ensembl" id="ENSMUST00000079204.9">
    <property type="protein sequence ID" value="ENSMUSP00000078198.6"/>
    <property type="gene ID" value="ENSMUSG00000029608.11"/>
</dbReference>
<dbReference type="Ensembl" id="ENSMUST00000202326.4">
    <property type="protein sequence ID" value="ENSMUSP00000144291.2"/>
    <property type="gene ID" value="ENSMUSG00000029608.11"/>
</dbReference>
<dbReference type="Ensembl" id="ENSMUST00000202406.4">
    <property type="protein sequence ID" value="ENSMUSP00000143917.2"/>
    <property type="gene ID" value="ENSMUSG00000029608.11"/>
</dbReference>
<dbReference type="GeneID" id="19894"/>
<dbReference type="KEGG" id="mmu:19894"/>
<dbReference type="UCSC" id="uc008zil.2">
    <property type="organism name" value="mouse"/>
</dbReference>
<dbReference type="AGR" id="MGI:102788"/>
<dbReference type="CTD" id="22895"/>
<dbReference type="MGI" id="MGI:102788">
    <property type="gene designation" value="Rph3a"/>
</dbReference>
<dbReference type="VEuPathDB" id="HostDB:ENSMUSG00000029608"/>
<dbReference type="eggNOG" id="KOG1013">
    <property type="taxonomic scope" value="Eukaryota"/>
</dbReference>
<dbReference type="GeneTree" id="ENSGT00940000157468"/>
<dbReference type="HOGENOM" id="CLU_011461_2_0_1"/>
<dbReference type="InParanoid" id="P47708"/>
<dbReference type="OMA" id="IRYHTSE"/>
<dbReference type="OrthoDB" id="270970at2759"/>
<dbReference type="PhylomeDB" id="P47708"/>
<dbReference type="TreeFam" id="TF351844"/>
<dbReference type="BioGRID-ORCS" id="19894">
    <property type="hits" value="1 hit in 77 CRISPR screens"/>
</dbReference>
<dbReference type="CD-CODE" id="CE726F99">
    <property type="entry name" value="Postsynaptic density"/>
</dbReference>
<dbReference type="ChiTaRS" id="Rph3a">
    <property type="organism name" value="mouse"/>
</dbReference>
<dbReference type="EvolutionaryTrace" id="P47708"/>
<dbReference type="PRO" id="PR:P47708"/>
<dbReference type="Proteomes" id="UP000000589">
    <property type="component" value="Chromosome 5"/>
</dbReference>
<dbReference type="RNAct" id="P47708">
    <property type="molecule type" value="protein"/>
</dbReference>
<dbReference type="Bgee" id="ENSMUSG00000029608">
    <property type="expression patterns" value="Expressed in primary visual cortex and 86 other cell types or tissues"/>
</dbReference>
<dbReference type="ExpressionAtlas" id="P47708">
    <property type="expression patterns" value="baseline and differential"/>
</dbReference>
<dbReference type="GO" id="GO:0043197">
    <property type="term" value="C:dendritic spine"/>
    <property type="evidence" value="ECO:0007669"/>
    <property type="project" value="UniProtKB-SubCell"/>
</dbReference>
<dbReference type="GO" id="GO:0019898">
    <property type="term" value="C:extrinsic component of membrane"/>
    <property type="evidence" value="ECO:0000250"/>
    <property type="project" value="ParkinsonsUK-UCL"/>
</dbReference>
<dbReference type="GO" id="GO:0043005">
    <property type="term" value="C:neuron projection"/>
    <property type="evidence" value="ECO:0000250"/>
    <property type="project" value="ParkinsonsUK-UCL"/>
</dbReference>
<dbReference type="GO" id="GO:0045211">
    <property type="term" value="C:postsynaptic membrane"/>
    <property type="evidence" value="ECO:0007669"/>
    <property type="project" value="UniProtKB-SubCell"/>
</dbReference>
<dbReference type="GO" id="GO:0032991">
    <property type="term" value="C:protein-containing complex"/>
    <property type="evidence" value="ECO:0000250"/>
    <property type="project" value="ParkinsonsUK-UCL"/>
</dbReference>
<dbReference type="GO" id="GO:0030141">
    <property type="term" value="C:secretory granule"/>
    <property type="evidence" value="ECO:0000250"/>
    <property type="project" value="ParkinsonsUK-UCL"/>
</dbReference>
<dbReference type="GO" id="GO:0045202">
    <property type="term" value="C:synapse"/>
    <property type="evidence" value="ECO:0000250"/>
    <property type="project" value="ParkinsonsUK-UCL"/>
</dbReference>
<dbReference type="GO" id="GO:0030672">
    <property type="term" value="C:synaptic vesicle membrane"/>
    <property type="evidence" value="ECO:0000250"/>
    <property type="project" value="ParkinsonsUK-UCL"/>
</dbReference>
<dbReference type="GO" id="GO:0005509">
    <property type="term" value="F:calcium ion binding"/>
    <property type="evidence" value="ECO:0000250"/>
    <property type="project" value="UniProtKB"/>
</dbReference>
<dbReference type="GO" id="GO:0005544">
    <property type="term" value="F:calcium-dependent phospholipid binding"/>
    <property type="evidence" value="ECO:0000250"/>
    <property type="project" value="UniProtKB"/>
</dbReference>
<dbReference type="GO" id="GO:0070679">
    <property type="term" value="F:inositol 1,4,5 trisphosphate binding"/>
    <property type="evidence" value="ECO:0000250"/>
    <property type="project" value="ParkinsonsUK-UCL"/>
</dbReference>
<dbReference type="GO" id="GO:0042301">
    <property type="term" value="F:phosphate ion binding"/>
    <property type="evidence" value="ECO:0000250"/>
    <property type="project" value="ParkinsonsUK-UCL"/>
</dbReference>
<dbReference type="GO" id="GO:0005546">
    <property type="term" value="F:phosphatidylinositol-4,5-bisphosphate binding"/>
    <property type="evidence" value="ECO:0000250"/>
    <property type="project" value="ParkinsonsUK-UCL"/>
</dbReference>
<dbReference type="GO" id="GO:0044877">
    <property type="term" value="F:protein-containing complex binding"/>
    <property type="evidence" value="ECO:0000250"/>
    <property type="project" value="ParkinsonsUK-UCL"/>
</dbReference>
<dbReference type="GO" id="GO:0008430">
    <property type="term" value="F:selenium binding"/>
    <property type="evidence" value="ECO:0000250"/>
    <property type="project" value="ParkinsonsUK-UCL"/>
</dbReference>
<dbReference type="GO" id="GO:0031267">
    <property type="term" value="F:small GTPase binding"/>
    <property type="evidence" value="ECO:0007669"/>
    <property type="project" value="InterPro"/>
</dbReference>
<dbReference type="GO" id="GO:0008270">
    <property type="term" value="F:zinc ion binding"/>
    <property type="evidence" value="ECO:0000250"/>
    <property type="project" value="ParkinsonsUK-UCL"/>
</dbReference>
<dbReference type="GO" id="GO:0006886">
    <property type="term" value="P:intracellular protein transport"/>
    <property type="evidence" value="ECO:0007669"/>
    <property type="project" value="InterPro"/>
</dbReference>
<dbReference type="GO" id="GO:0061669">
    <property type="term" value="P:spontaneous neurotransmitter secretion"/>
    <property type="evidence" value="ECO:0000316"/>
    <property type="project" value="MGI"/>
</dbReference>
<dbReference type="GO" id="GO:0016082">
    <property type="term" value="P:synaptic vesicle priming"/>
    <property type="evidence" value="ECO:0000314"/>
    <property type="project" value="SynGO"/>
</dbReference>
<dbReference type="CDD" id="cd04035">
    <property type="entry name" value="C2A_Rabphilin_Doc2"/>
    <property type="match status" value="1"/>
</dbReference>
<dbReference type="CDD" id="cd08384">
    <property type="entry name" value="C2B_Rabphilin_Doc2"/>
    <property type="match status" value="1"/>
</dbReference>
<dbReference type="CDD" id="cd15762">
    <property type="entry name" value="FYVE_RP3A"/>
    <property type="match status" value="1"/>
</dbReference>
<dbReference type="FunFam" id="2.60.40.150:FF:000032">
    <property type="entry name" value="Double c2-like domain-containing"/>
    <property type="match status" value="1"/>
</dbReference>
<dbReference type="FunFam" id="2.60.40.150:FF:000023">
    <property type="entry name" value="Double C2-like domain-containing protein"/>
    <property type="match status" value="1"/>
</dbReference>
<dbReference type="FunFam" id="3.30.40.10:FF:000182">
    <property type="entry name" value="rabphilin-3A isoform X1"/>
    <property type="match status" value="1"/>
</dbReference>
<dbReference type="Gene3D" id="2.60.40.150">
    <property type="entry name" value="C2 domain"/>
    <property type="match status" value="2"/>
</dbReference>
<dbReference type="Gene3D" id="3.30.40.10">
    <property type="entry name" value="Zinc/RING finger domain, C3HC4 (zinc finger)"/>
    <property type="match status" value="1"/>
</dbReference>
<dbReference type="InterPro" id="IPR000008">
    <property type="entry name" value="C2_dom"/>
</dbReference>
<dbReference type="InterPro" id="IPR035892">
    <property type="entry name" value="C2_domain_sf"/>
</dbReference>
<dbReference type="InterPro" id="IPR041282">
    <property type="entry name" value="FYVE_2"/>
</dbReference>
<dbReference type="InterPro" id="IPR028698">
    <property type="entry name" value="FYVE_RPH3A"/>
</dbReference>
<dbReference type="InterPro" id="IPR010911">
    <property type="entry name" value="Rab_BD"/>
</dbReference>
<dbReference type="InterPro" id="IPR043566">
    <property type="entry name" value="Rabphilin/DOC2/Noc2"/>
</dbReference>
<dbReference type="InterPro" id="IPR047022">
    <property type="entry name" value="Rabphilin_Doc2_C2A"/>
</dbReference>
<dbReference type="InterPro" id="IPR001565">
    <property type="entry name" value="Synaptotagmin"/>
</dbReference>
<dbReference type="InterPro" id="IPR017455">
    <property type="entry name" value="Znf_FYVE-rel"/>
</dbReference>
<dbReference type="InterPro" id="IPR011011">
    <property type="entry name" value="Znf_FYVE_PHD"/>
</dbReference>
<dbReference type="InterPro" id="IPR013083">
    <property type="entry name" value="Znf_RING/FYVE/PHD"/>
</dbReference>
<dbReference type="PANTHER" id="PTHR45729">
    <property type="entry name" value="RABPHILIN, ISOFORM A"/>
    <property type="match status" value="1"/>
</dbReference>
<dbReference type="PANTHER" id="PTHR45729:SF3">
    <property type="entry name" value="RABPHILIN-3A"/>
    <property type="match status" value="1"/>
</dbReference>
<dbReference type="Pfam" id="PF00168">
    <property type="entry name" value="C2"/>
    <property type="match status" value="2"/>
</dbReference>
<dbReference type="Pfam" id="PF02318">
    <property type="entry name" value="FYVE_2"/>
    <property type="match status" value="1"/>
</dbReference>
<dbReference type="PRINTS" id="PR00360">
    <property type="entry name" value="C2DOMAIN"/>
</dbReference>
<dbReference type="PRINTS" id="PR00399">
    <property type="entry name" value="SYNAPTOTAGMN"/>
</dbReference>
<dbReference type="SMART" id="SM00239">
    <property type="entry name" value="C2"/>
    <property type="match status" value="2"/>
</dbReference>
<dbReference type="SUPFAM" id="SSF49562">
    <property type="entry name" value="C2 domain (Calcium/lipid-binding domain, CaLB)"/>
    <property type="match status" value="2"/>
</dbReference>
<dbReference type="SUPFAM" id="SSF57903">
    <property type="entry name" value="FYVE/PHD zinc finger"/>
    <property type="match status" value="1"/>
</dbReference>
<dbReference type="PROSITE" id="PS50004">
    <property type="entry name" value="C2"/>
    <property type="match status" value="2"/>
</dbReference>
<dbReference type="PROSITE" id="PS50916">
    <property type="entry name" value="RABBD"/>
    <property type="match status" value="1"/>
</dbReference>
<dbReference type="PROSITE" id="PS50178">
    <property type="entry name" value="ZF_FYVE"/>
    <property type="match status" value="1"/>
</dbReference>
<sequence length="681" mass="75489">MTDTVVNRWMYPGDGPLQSNDKEQLQAGWSVHPGAQTDRQRKQEELTDEEKEIINRVIARAEKMEAMEQERIGRLVDRLETMRKNVAGDGVNRCILCGEQLGMLGSACVVCEDCKKNVCTKCGVETSNNRPHPVWLCKICLEQREVWKRSGAWFFKGFPKQVLPQPMPIKKTKPQQPAGEPATQEQPTPESRHPARAPARGDMEDRRPPGQKPGPDLTSAPGRGSHGPPTRRASEARMSTAARDSEGWDHAHGGGTGDTSRSPAGLRRANSVQAARPAPAPVPSPAPPQPVQPGPPGGSRATPGPGRFPEQSTEAPPSDPGYPGAVAPAREERTGPAGGFQAAPHTAAPYSQAAPARQPPPAEEEEEEANSYDSDEATTLGALEFSLLYDQDNSNLQCTIIRAKGLKPMDSNGLADPYVKLHLLPGASKSNKLRTKTLRNTRNPVWNETLQYHGITEEDMQRKTLRISVCDEDKFGHNEFIGETRFSLKKLKANQRKNFNICLERVIPMKRAGTTGSARGMALYEEEQVERIGDIEERGKILVSLMYSTQQGGLIVGIIRCVHLAAMDANGYSDPFVKLWLKPDMGKKAKHKTQIKKKTLNPEFNEEFFYDIKHSDLAKKSLDISVWDYDIGKSNDYIGGCQLGISAKGERLKHWYECLKNKDKKIERWHQLQNENHVSSD</sequence>
<evidence type="ECO:0000250" key="1">
    <source>
        <dbReference type="UniProtKB" id="P47709"/>
    </source>
</evidence>
<evidence type="ECO:0000250" key="2">
    <source>
        <dbReference type="UniProtKB" id="Q9Y2J0"/>
    </source>
</evidence>
<evidence type="ECO:0000255" key="3">
    <source>
        <dbReference type="PROSITE-ProRule" id="PRU00041"/>
    </source>
</evidence>
<evidence type="ECO:0000255" key="4">
    <source>
        <dbReference type="PROSITE-ProRule" id="PRU00091"/>
    </source>
</evidence>
<evidence type="ECO:0000255" key="5">
    <source>
        <dbReference type="PROSITE-ProRule" id="PRU00234"/>
    </source>
</evidence>
<evidence type="ECO:0000256" key="6">
    <source>
        <dbReference type="SAM" id="MobiDB-lite"/>
    </source>
</evidence>
<evidence type="ECO:0000269" key="7">
    <source>
    </source>
</evidence>
<evidence type="ECO:0000269" key="8">
    <source>
    </source>
</evidence>
<evidence type="ECO:0000269" key="9">
    <source>
    </source>
</evidence>
<evidence type="ECO:0007744" key="10">
    <source>
        <dbReference type="PDB" id="2K3H"/>
    </source>
</evidence>
<evidence type="ECO:0007744" key="11">
    <source>
    </source>
</evidence>
<evidence type="ECO:0007744" key="12">
    <source>
    </source>
</evidence>
<evidence type="ECO:0007829" key="13">
    <source>
        <dbReference type="PDB" id="2K3H"/>
    </source>
</evidence>
<gene>
    <name type="primary">Rph3a</name>
</gene>
<reference key="1">
    <citation type="submission" date="2001-11" db="EMBL/GenBank/DDBJ databases">
        <authorList>
            <person name="Inagaki N."/>
        </authorList>
    </citation>
    <scope>NUCLEOTIDE SEQUENCE [MRNA]</scope>
    <source>
        <strain>C57BL/6J</strain>
    </source>
</reference>
<reference key="2">
    <citation type="journal article" date="2004" name="Genome Res.">
        <title>The status, quality, and expansion of the NIH full-length cDNA project: the Mammalian Gene Collection (MGC).</title>
        <authorList>
            <consortium name="The MGC Project Team"/>
        </authorList>
    </citation>
    <scope>NUCLEOTIDE SEQUENCE [LARGE SCALE MRNA]</scope>
    <source>
        <strain>C57BL/6J</strain>
        <tissue>Brain</tissue>
        <tissue>Eye</tissue>
    </source>
</reference>
<reference key="3">
    <citation type="journal article" date="1994" name="J. Biochem.">
        <title>Cloning of a mouse Rabphilin-3A expressed in hormone-secreting cells.</title>
        <authorList>
            <person name="Inagaki N."/>
            <person name="Mizuta M."/>
            <person name="Seino S."/>
        </authorList>
    </citation>
    <scope>NUCLEOTIDE SEQUENCE [MRNA] OF 1-606</scope>
    <source>
        <strain>C57BL/6J</strain>
    </source>
</reference>
<reference key="4">
    <citation type="journal article" date="1999" name="J. Neurosci.">
        <title>Rabphilin knock-out mice reveal that rabphilin is not required for rab3 function in regulating neurotransmitter release.</title>
        <authorList>
            <person name="Schlueter O.M."/>
            <person name="Schnell E."/>
            <person name="Verhage M."/>
            <person name="Tzonopoulos T."/>
            <person name="Nicoll R.A."/>
            <person name="Janz R."/>
            <person name="Malenka R.C."/>
            <person name="Geppert M."/>
            <person name="Suedhof T.C."/>
        </authorList>
    </citation>
    <scope>DISRUPTION PHENOTYPE</scope>
</reference>
<reference key="5">
    <citation type="journal article" date="2003" name="J. Biol. Chem.">
        <title>Distinct Rab binding specificity of Rim1, Rim2, rabphilin, and Noc2. Identification of a critical determinant of Rab3A/Rab27A recognition by Rim2.</title>
        <authorList>
            <person name="Fukuda M."/>
        </authorList>
    </citation>
    <scope>INTERACTION WITH RAB3A; RAB3B; RAB3C; RAB3D; RAB8A; RAB27A AND RAB27B</scope>
</reference>
<reference key="6">
    <citation type="journal article" date="2007" name="Mol. Cell. Proteomics">
        <title>Qualitative and quantitative analyses of protein phosphorylation in naive and stimulated mouse synaptosomal preparations.</title>
        <authorList>
            <person name="Munton R.P."/>
            <person name="Tweedie-Cullen R."/>
            <person name="Livingstone-Zatchej M."/>
            <person name="Weinandy F."/>
            <person name="Waidelich M."/>
            <person name="Longo D."/>
            <person name="Gehrig P."/>
            <person name="Potthast F."/>
            <person name="Rutishauser D."/>
            <person name="Gerrits B."/>
            <person name="Panse C."/>
            <person name="Schlapbach R."/>
            <person name="Mansuy I.M."/>
        </authorList>
    </citation>
    <scope>IDENTIFICATION BY MASS SPECTROMETRY [LARGE SCALE ANALYSIS]</scope>
    <source>
        <tissue>Brain cortex</tissue>
    </source>
</reference>
<reference key="7">
    <citation type="journal article" date="2010" name="Cell">
        <title>A tissue-specific atlas of mouse protein phosphorylation and expression.</title>
        <authorList>
            <person name="Huttlin E.L."/>
            <person name="Jedrychowski M.P."/>
            <person name="Elias J.E."/>
            <person name="Goswami T."/>
            <person name="Rad R."/>
            <person name="Beausoleil S.A."/>
            <person name="Villen J."/>
            <person name="Haas W."/>
            <person name="Sowa M.E."/>
            <person name="Gygi S.P."/>
        </authorList>
    </citation>
    <scope>PHOSPHORYLATION [LARGE SCALE ANALYSIS] AT SER-271</scope>
    <scope>IDENTIFICATION BY MASS SPECTROMETRY [LARGE SCALE ANALYSIS]</scope>
    <source>
        <tissue>Brain</tissue>
    </source>
</reference>
<reference key="8">
    <citation type="journal article" date="2014" name="Mol. Cell. Proteomics">
        <title>Immunoaffinity enrichment and mass spectrometry analysis of protein methylation.</title>
        <authorList>
            <person name="Guo A."/>
            <person name="Gu H."/>
            <person name="Zhou J."/>
            <person name="Mulhern D."/>
            <person name="Wang Y."/>
            <person name="Lee K.A."/>
            <person name="Yang V."/>
            <person name="Aguiar M."/>
            <person name="Kornhauser J."/>
            <person name="Jia X."/>
            <person name="Ren J."/>
            <person name="Beausoleil S.A."/>
            <person name="Silva J.C."/>
            <person name="Vemulapalli V."/>
            <person name="Bedford M.T."/>
            <person name="Comb M.J."/>
        </authorList>
    </citation>
    <scope>METHYLATION [LARGE SCALE ANALYSIS] AT ARG-223</scope>
    <scope>IDENTIFICATION BY MASS SPECTROMETRY [LARGE SCALE ANALYSIS]</scope>
    <source>
        <tissue>Brain</tissue>
    </source>
</reference>
<reference key="9">
    <citation type="journal article" date="2008" name="J. Biol. Chem.">
        <title>Structural determinants for Ca2+ and phosphatidylinositol 4,5-bisphosphate binding by the C2A domain of rabphilin-3A.</title>
        <authorList>
            <person name="Coudevylle N."/>
            <person name="Montaville P."/>
            <person name="Leonov A."/>
            <person name="Zweckstetter M."/>
            <person name="Becker S."/>
        </authorList>
    </citation>
    <scope>STRUCTURE BY NMR OF 368-507 IN COMPLEX WITH CALCIUM IONS</scope>
    <scope>CALCIUM-BINDING DOMAIN</scope>
    <scope>SUBCELLULAR LOCATION</scope>
    <scope>LIPID-BINDING</scope>
</reference>
<organism>
    <name type="scientific">Mus musculus</name>
    <name type="common">Mouse</name>
    <dbReference type="NCBI Taxonomy" id="10090"/>
    <lineage>
        <taxon>Eukaryota</taxon>
        <taxon>Metazoa</taxon>
        <taxon>Chordata</taxon>
        <taxon>Craniata</taxon>
        <taxon>Vertebrata</taxon>
        <taxon>Euteleostomi</taxon>
        <taxon>Mammalia</taxon>
        <taxon>Eutheria</taxon>
        <taxon>Euarchontoglires</taxon>
        <taxon>Glires</taxon>
        <taxon>Rodentia</taxon>
        <taxon>Myomorpha</taxon>
        <taxon>Muroidea</taxon>
        <taxon>Muridae</taxon>
        <taxon>Murinae</taxon>
        <taxon>Mus</taxon>
        <taxon>Mus</taxon>
    </lineage>
</organism>
<comment type="function">
    <text evidence="1">Plays an essential role in docking and fusion steps of regulated exocytosis (By similarity). At the presynaptic level, RPH3A is recruited by RAB3A to the synaptic vesicle membrane in a GTP-dependent manner where it modulates synaptic vesicle trafficking and calcium-triggered neurotransmitter release (By similarity). In the post-synaptic compartment, forms a ternary complex with GRIN2A and DLG4 and regulates NMDA receptor stability. Also plays a role in the exocytosis of arginine vasopressin hormone (By similarity).</text>
</comment>
<comment type="cofactor">
    <cofactor evidence="3">
        <name>Ca(2+)</name>
        <dbReference type="ChEBI" id="CHEBI:29108"/>
    </cofactor>
</comment>
<comment type="subunit">
    <text evidence="1 2 8">Interacts with RAB3B, RAB3C, RAB3D, RAB8A, RAB27A and RAB27B (PubMed:12578829). Interacts with RAB3A; this interaction recruits RPH3A to synaptic vesicules (By similarity). Interacts (via C2B domain) with SNAP25 (By similarity). Interacts with deubiquitinating enzyme CAND1; this interaction results in the deubiquitination of RPH3A (By similarity). Interacts with GRIN2A and DLG4; this ternary complex regulates NMDA receptor composition at postsynaptic membranes (By similarity). Interacts with SNCA (By similarity).</text>
</comment>
<comment type="interaction">
    <interactant intactId="EBI-398376">
        <id>P47708</id>
    </interactant>
    <interactant intactId="EBI-398172">
        <id>Q9ERI2</id>
        <label>Rab27a</label>
    </interactant>
    <organismsDiffer>false</organismsDiffer>
    <experiments>2</experiments>
</comment>
<comment type="interaction">
    <interactant intactId="EBI-398376">
        <id>P47708</id>
    </interactant>
    <interactant intactId="EBI-398393">
        <id>P63011</id>
        <label>Rab3a</label>
    </interactant>
    <organismsDiffer>false</organismsDiffer>
    <experiments>2</experiments>
</comment>
<comment type="interaction">
    <interactant intactId="EBI-398376">
        <id>P47708</id>
    </interactant>
    <interactant intactId="EBI-398411">
        <id>P55258</id>
        <label>Rab8a</label>
    </interactant>
    <organismsDiffer>false</organismsDiffer>
    <experiments>2</experiments>
</comment>
<comment type="subcellular location">
    <subcellularLocation>
        <location evidence="1">Cytoplasmic vesicle</location>
        <location evidence="1">Secretory vesicle</location>
        <location evidence="1">Synaptic vesicle membrane</location>
    </subcellularLocation>
    <subcellularLocation>
        <location evidence="1">Cell projection</location>
        <location evidence="1">Dendritic spine</location>
    </subcellularLocation>
    <subcellularLocation>
        <location evidence="1">Postsynaptic cell membrane</location>
    </subcellularLocation>
    <subcellularLocation>
        <location evidence="1">Membrane</location>
        <topology evidence="1">Peripheral membrane protein</topology>
    </subcellularLocation>
</comment>
<comment type="tissue specificity">
    <text>Specifically expressed in brain.</text>
</comment>
<comment type="domain">
    <text>Binds calcium via the C2 domains. The calcium-bound C2 domains mediate interactions with phospholipid bilayers.</text>
</comment>
<comment type="PTM">
    <text evidence="1">Ubiquitinated. Deubiquitinated by CAND1 to prevent its degradation.</text>
</comment>
<comment type="disruption phenotype">
    <text evidence="7">No visible phenotype. Mice are viable and fertile and do not display any physiological impairment. Additionally, synaptic properties seem unaffected.</text>
</comment>
<proteinExistence type="evidence at protein level"/>
<name>RP3A_MOUSE</name>
<protein>
    <recommendedName>
        <fullName>Rabphilin-3A</fullName>
    </recommendedName>
    <alternativeName>
        <fullName>Exophilin-1</fullName>
    </alternativeName>
</protein>
<accession>P47708</accession>